<feature type="chain" id="PRO_0000365916" description="ATP synthase subunit c">
    <location>
        <begin position="1"/>
        <end position="82"/>
    </location>
</feature>
<feature type="transmembrane region" description="Helical" evidence="1">
    <location>
        <begin position="7"/>
        <end position="27"/>
    </location>
</feature>
<feature type="transmembrane region" description="Helical" evidence="1">
    <location>
        <begin position="57"/>
        <end position="77"/>
    </location>
</feature>
<feature type="site" description="Reversibly protonated during proton transport" evidence="1">
    <location>
        <position position="61"/>
    </location>
</feature>
<sequence length="82" mass="7989">MDSITTAASVVAAGLAVGLGAIGPGIGQGTAAGGAVEGIARQPEAEGKIRGTLLLSFAFMESLTIYGLVVALVLLFANPFAG</sequence>
<protein>
    <recommendedName>
        <fullName evidence="1">ATP synthase subunit c</fullName>
    </recommendedName>
    <alternativeName>
        <fullName evidence="1">ATP synthase F(0) sector subunit c</fullName>
    </alternativeName>
    <alternativeName>
        <fullName evidence="1">F-type ATPase subunit c</fullName>
        <shortName evidence="1">F-ATPase subunit c</shortName>
    </alternativeName>
    <alternativeName>
        <fullName evidence="1">Lipid-binding protein</fullName>
    </alternativeName>
</protein>
<organism>
    <name type="scientific">Prochlorococcus marinus (strain MIT 9313)</name>
    <dbReference type="NCBI Taxonomy" id="74547"/>
    <lineage>
        <taxon>Bacteria</taxon>
        <taxon>Bacillati</taxon>
        <taxon>Cyanobacteriota</taxon>
        <taxon>Cyanophyceae</taxon>
        <taxon>Synechococcales</taxon>
        <taxon>Prochlorococcaceae</taxon>
        <taxon>Prochlorococcus</taxon>
    </lineage>
</organism>
<dbReference type="EMBL" id="BX548175">
    <property type="protein sequence ID" value="CAE21646.1"/>
    <property type="status" value="ALT_INIT"/>
    <property type="molecule type" value="Genomic_DNA"/>
</dbReference>
<dbReference type="RefSeq" id="WP_011130839.1">
    <property type="nucleotide sequence ID" value="NC_005071.1"/>
</dbReference>
<dbReference type="SMR" id="Q7V5S3"/>
<dbReference type="KEGG" id="pmt:PMT_1471"/>
<dbReference type="eggNOG" id="COG0636">
    <property type="taxonomic scope" value="Bacteria"/>
</dbReference>
<dbReference type="HOGENOM" id="CLU_148047_0_0_3"/>
<dbReference type="OrthoDB" id="9810379at2"/>
<dbReference type="Proteomes" id="UP000001423">
    <property type="component" value="Chromosome"/>
</dbReference>
<dbReference type="GO" id="GO:0031676">
    <property type="term" value="C:plasma membrane-derived thylakoid membrane"/>
    <property type="evidence" value="ECO:0007669"/>
    <property type="project" value="UniProtKB-SubCell"/>
</dbReference>
<dbReference type="GO" id="GO:0045259">
    <property type="term" value="C:proton-transporting ATP synthase complex"/>
    <property type="evidence" value="ECO:0007669"/>
    <property type="project" value="UniProtKB-KW"/>
</dbReference>
<dbReference type="GO" id="GO:0033177">
    <property type="term" value="C:proton-transporting two-sector ATPase complex, proton-transporting domain"/>
    <property type="evidence" value="ECO:0007669"/>
    <property type="project" value="InterPro"/>
</dbReference>
<dbReference type="GO" id="GO:0008289">
    <property type="term" value="F:lipid binding"/>
    <property type="evidence" value="ECO:0007669"/>
    <property type="project" value="UniProtKB-KW"/>
</dbReference>
<dbReference type="GO" id="GO:0046933">
    <property type="term" value="F:proton-transporting ATP synthase activity, rotational mechanism"/>
    <property type="evidence" value="ECO:0007669"/>
    <property type="project" value="UniProtKB-UniRule"/>
</dbReference>
<dbReference type="CDD" id="cd18183">
    <property type="entry name" value="ATP-synt_Fo_c_ATPH"/>
    <property type="match status" value="1"/>
</dbReference>
<dbReference type="FunFam" id="1.20.20.10:FF:000001">
    <property type="entry name" value="ATP synthase subunit c, chloroplastic"/>
    <property type="match status" value="1"/>
</dbReference>
<dbReference type="Gene3D" id="1.20.20.10">
    <property type="entry name" value="F1F0 ATP synthase subunit C"/>
    <property type="match status" value="1"/>
</dbReference>
<dbReference type="HAMAP" id="MF_01396">
    <property type="entry name" value="ATP_synth_c_bact"/>
    <property type="match status" value="1"/>
</dbReference>
<dbReference type="InterPro" id="IPR005953">
    <property type="entry name" value="ATP_synth_csu_bac/chlpt"/>
</dbReference>
<dbReference type="InterPro" id="IPR000454">
    <property type="entry name" value="ATP_synth_F0_csu"/>
</dbReference>
<dbReference type="InterPro" id="IPR020537">
    <property type="entry name" value="ATP_synth_F0_csu_DDCD_BS"/>
</dbReference>
<dbReference type="InterPro" id="IPR038662">
    <property type="entry name" value="ATP_synth_F0_csu_sf"/>
</dbReference>
<dbReference type="InterPro" id="IPR002379">
    <property type="entry name" value="ATPase_proteolipid_c-like_dom"/>
</dbReference>
<dbReference type="InterPro" id="IPR035921">
    <property type="entry name" value="F/V-ATP_Csub_sf"/>
</dbReference>
<dbReference type="NCBIfam" id="TIGR01260">
    <property type="entry name" value="ATP_synt_c"/>
    <property type="match status" value="1"/>
</dbReference>
<dbReference type="NCBIfam" id="NF005608">
    <property type="entry name" value="PRK07354.1"/>
    <property type="match status" value="1"/>
</dbReference>
<dbReference type="PANTHER" id="PTHR10031">
    <property type="entry name" value="ATP SYNTHASE LIPID-BINDING PROTEIN, MITOCHONDRIAL"/>
    <property type="match status" value="1"/>
</dbReference>
<dbReference type="PANTHER" id="PTHR10031:SF0">
    <property type="entry name" value="ATPASE PROTEIN 9"/>
    <property type="match status" value="1"/>
</dbReference>
<dbReference type="Pfam" id="PF00137">
    <property type="entry name" value="ATP-synt_C"/>
    <property type="match status" value="1"/>
</dbReference>
<dbReference type="PRINTS" id="PR00124">
    <property type="entry name" value="ATPASEC"/>
</dbReference>
<dbReference type="SUPFAM" id="SSF81333">
    <property type="entry name" value="F1F0 ATP synthase subunit C"/>
    <property type="match status" value="1"/>
</dbReference>
<dbReference type="PROSITE" id="PS00605">
    <property type="entry name" value="ATPASE_C"/>
    <property type="match status" value="1"/>
</dbReference>
<proteinExistence type="inferred from homology"/>
<keyword id="KW-0066">ATP synthesis</keyword>
<keyword id="KW-0138">CF(0)</keyword>
<keyword id="KW-0375">Hydrogen ion transport</keyword>
<keyword id="KW-0406">Ion transport</keyword>
<keyword id="KW-0446">Lipid-binding</keyword>
<keyword id="KW-0472">Membrane</keyword>
<keyword id="KW-1185">Reference proteome</keyword>
<keyword id="KW-0793">Thylakoid</keyword>
<keyword id="KW-0812">Transmembrane</keyword>
<keyword id="KW-1133">Transmembrane helix</keyword>
<keyword id="KW-0813">Transport</keyword>
<gene>
    <name evidence="1" type="primary">atpE</name>
    <name evidence="1" type="synonym">atpH</name>
    <name type="ordered locus">PMT_1471</name>
</gene>
<reference key="1">
    <citation type="journal article" date="2003" name="Nature">
        <title>Genome divergence in two Prochlorococcus ecotypes reflects oceanic niche differentiation.</title>
        <authorList>
            <person name="Rocap G."/>
            <person name="Larimer F.W."/>
            <person name="Lamerdin J.E."/>
            <person name="Malfatti S."/>
            <person name="Chain P."/>
            <person name="Ahlgren N.A."/>
            <person name="Arellano A."/>
            <person name="Coleman M."/>
            <person name="Hauser L."/>
            <person name="Hess W.R."/>
            <person name="Johnson Z.I."/>
            <person name="Land M.L."/>
            <person name="Lindell D."/>
            <person name="Post A.F."/>
            <person name="Regala W."/>
            <person name="Shah M."/>
            <person name="Shaw S.L."/>
            <person name="Steglich C."/>
            <person name="Sullivan M.B."/>
            <person name="Ting C.S."/>
            <person name="Tolonen A."/>
            <person name="Webb E.A."/>
            <person name="Zinser E.R."/>
            <person name="Chisholm S.W."/>
        </authorList>
    </citation>
    <scope>NUCLEOTIDE SEQUENCE [LARGE SCALE GENOMIC DNA]</scope>
    <source>
        <strain>MIT 9313</strain>
    </source>
</reference>
<name>ATPL_PROMM</name>
<accession>Q7V5S3</accession>
<comment type="function">
    <text evidence="1">F(1)F(0) ATP synthase produces ATP from ADP in the presence of a proton or sodium gradient. F-type ATPases consist of two structural domains, F(1) containing the extramembraneous catalytic core and F(0) containing the membrane proton channel, linked together by a central stalk and a peripheral stalk. During catalysis, ATP synthesis in the catalytic domain of F(1) is coupled via a rotary mechanism of the central stalk subunits to proton translocation.</text>
</comment>
<comment type="function">
    <text evidence="1">Key component of the F(0) channel; it plays a direct role in translocation across the membrane. A homomeric c-ring of between 10-14 subunits forms the central stalk rotor element with the F(1) delta and epsilon subunits.</text>
</comment>
<comment type="subunit">
    <text evidence="1">F-type ATPases have 2 components, F(1) - the catalytic core - and F(0) - the membrane proton channel. F(1) has five subunits: alpha(3), beta(3), gamma(1), delta(1), epsilon(1). F(0) has four main subunits: a(1), b(1), b'(1) and c(10-14). The alpha and beta chains form an alternating ring which encloses part of the gamma chain. F(1) is attached to F(0) by a central stalk formed by the gamma and epsilon chains, while a peripheral stalk is formed by the delta, b and b' chains.</text>
</comment>
<comment type="subcellular location">
    <subcellularLocation>
        <location evidence="1">Cellular thylakoid membrane</location>
        <topology evidence="1">Multi-pass membrane protein</topology>
    </subcellularLocation>
</comment>
<comment type="similarity">
    <text evidence="1">Belongs to the ATPase C chain family.</text>
</comment>
<comment type="sequence caution" evidence="2">
    <conflict type="erroneous initiation">
        <sequence resource="EMBL-CDS" id="CAE21646"/>
    </conflict>
</comment>
<evidence type="ECO:0000255" key="1">
    <source>
        <dbReference type="HAMAP-Rule" id="MF_01396"/>
    </source>
</evidence>
<evidence type="ECO:0000305" key="2"/>